<protein>
    <recommendedName>
        <fullName evidence="1">Dihydroorotate dehydrogenase B (NAD(+)), electron transfer subunit</fullName>
    </recommendedName>
    <alternativeName>
        <fullName evidence="1">Dihydroorotate oxidase B, electron transfer subunit</fullName>
    </alternativeName>
</protein>
<feature type="chain" id="PRO_1000066402" description="Dihydroorotate dehydrogenase B (NAD(+)), electron transfer subunit">
    <location>
        <begin position="1"/>
        <end position="257"/>
    </location>
</feature>
<feature type="domain" description="FAD-binding FR-type" evidence="1">
    <location>
        <begin position="2"/>
        <end position="102"/>
    </location>
</feature>
<feature type="binding site" evidence="1">
    <location>
        <begin position="53"/>
        <end position="56"/>
    </location>
    <ligand>
        <name>FAD</name>
        <dbReference type="ChEBI" id="CHEBI:57692"/>
    </ligand>
</feature>
<feature type="binding site" evidence="1">
    <location>
        <begin position="70"/>
        <end position="72"/>
    </location>
    <ligand>
        <name>FAD</name>
        <dbReference type="ChEBI" id="CHEBI:57692"/>
    </ligand>
</feature>
<feature type="binding site" evidence="1">
    <location>
        <begin position="77"/>
        <end position="78"/>
    </location>
    <ligand>
        <name>FAD</name>
        <dbReference type="ChEBI" id="CHEBI:57692"/>
    </ligand>
</feature>
<feature type="binding site" evidence="1">
    <location>
        <position position="221"/>
    </location>
    <ligand>
        <name>[2Fe-2S] cluster</name>
        <dbReference type="ChEBI" id="CHEBI:190135"/>
    </ligand>
</feature>
<feature type="binding site" evidence="1">
    <location>
        <position position="226"/>
    </location>
    <ligand>
        <name>[2Fe-2S] cluster</name>
        <dbReference type="ChEBI" id="CHEBI:190135"/>
    </ligand>
</feature>
<feature type="binding site" evidence="1">
    <location>
        <position position="229"/>
    </location>
    <ligand>
        <name>[2Fe-2S] cluster</name>
        <dbReference type="ChEBI" id="CHEBI:190135"/>
    </ligand>
</feature>
<feature type="binding site" evidence="1">
    <location>
        <position position="244"/>
    </location>
    <ligand>
        <name>[2Fe-2S] cluster</name>
        <dbReference type="ChEBI" id="CHEBI:190135"/>
    </ligand>
</feature>
<name>PYRK_GEOKA</name>
<dbReference type="EMBL" id="BA000043">
    <property type="protein sequence ID" value="BAD75438.1"/>
    <property type="molecule type" value="Genomic_DNA"/>
</dbReference>
<dbReference type="RefSeq" id="WP_011230653.1">
    <property type="nucleotide sequence ID" value="NC_006510.1"/>
</dbReference>
<dbReference type="SMR" id="Q5L0U2"/>
<dbReference type="STRING" id="235909.GK1153"/>
<dbReference type="KEGG" id="gka:GK1153"/>
<dbReference type="PATRIC" id="fig|235909.7.peg.1254"/>
<dbReference type="eggNOG" id="COG0543">
    <property type="taxonomic scope" value="Bacteria"/>
</dbReference>
<dbReference type="HOGENOM" id="CLU_003827_1_2_9"/>
<dbReference type="UniPathway" id="UPA00070">
    <property type="reaction ID" value="UER00945"/>
</dbReference>
<dbReference type="Proteomes" id="UP000001172">
    <property type="component" value="Chromosome"/>
</dbReference>
<dbReference type="GO" id="GO:0051537">
    <property type="term" value="F:2 iron, 2 sulfur cluster binding"/>
    <property type="evidence" value="ECO:0007669"/>
    <property type="project" value="UniProtKB-KW"/>
</dbReference>
<dbReference type="GO" id="GO:0009055">
    <property type="term" value="F:electron transfer activity"/>
    <property type="evidence" value="ECO:0007669"/>
    <property type="project" value="UniProtKB-UniRule"/>
</dbReference>
<dbReference type="GO" id="GO:0050660">
    <property type="term" value="F:flavin adenine dinucleotide binding"/>
    <property type="evidence" value="ECO:0007669"/>
    <property type="project" value="InterPro"/>
</dbReference>
<dbReference type="GO" id="GO:0046872">
    <property type="term" value="F:metal ion binding"/>
    <property type="evidence" value="ECO:0007669"/>
    <property type="project" value="UniProtKB-KW"/>
</dbReference>
<dbReference type="GO" id="GO:0016491">
    <property type="term" value="F:oxidoreductase activity"/>
    <property type="evidence" value="ECO:0007669"/>
    <property type="project" value="InterPro"/>
</dbReference>
<dbReference type="GO" id="GO:0044205">
    <property type="term" value="P:'de novo' UMP biosynthetic process"/>
    <property type="evidence" value="ECO:0007669"/>
    <property type="project" value="UniProtKB-UniRule"/>
</dbReference>
<dbReference type="CDD" id="cd06218">
    <property type="entry name" value="DHOD_e_trans"/>
    <property type="match status" value="1"/>
</dbReference>
<dbReference type="FunFam" id="2.10.240.10:FF:000001">
    <property type="entry name" value="Dihydroorotate dehydrogenase B (NAD(+)), electron transfer subunit"/>
    <property type="match status" value="1"/>
</dbReference>
<dbReference type="FunFam" id="3.40.50.80:FF:000017">
    <property type="entry name" value="Dihydroorotate dehydrogenase B (NAD(+)), electron transfer subunit"/>
    <property type="match status" value="1"/>
</dbReference>
<dbReference type="Gene3D" id="2.10.240.10">
    <property type="entry name" value="Dihydroorotate dehydrogenase, electron transfer subunit"/>
    <property type="match status" value="1"/>
</dbReference>
<dbReference type="Gene3D" id="3.40.50.80">
    <property type="entry name" value="Nucleotide-binding domain of ferredoxin-NADP reductase (FNR) module"/>
    <property type="match status" value="1"/>
</dbReference>
<dbReference type="Gene3D" id="2.40.30.10">
    <property type="entry name" value="Translation factors"/>
    <property type="match status" value="1"/>
</dbReference>
<dbReference type="HAMAP" id="MF_01211">
    <property type="entry name" value="DHODB_Fe_S_bind"/>
    <property type="match status" value="1"/>
</dbReference>
<dbReference type="InterPro" id="IPR008333">
    <property type="entry name" value="Cbr1-like_FAD-bd_dom"/>
</dbReference>
<dbReference type="InterPro" id="IPR012165">
    <property type="entry name" value="Cyt_c3_hydrogenase_gsu"/>
</dbReference>
<dbReference type="InterPro" id="IPR037117">
    <property type="entry name" value="Dihydroorotate_DH_ele_sf"/>
</dbReference>
<dbReference type="InterPro" id="IPR019480">
    <property type="entry name" value="Dihydroorotate_DH_Fe-S-bd"/>
</dbReference>
<dbReference type="InterPro" id="IPR023455">
    <property type="entry name" value="Dihydroorotate_DHASE_ETsu"/>
</dbReference>
<dbReference type="InterPro" id="IPR017927">
    <property type="entry name" value="FAD-bd_FR_type"/>
</dbReference>
<dbReference type="InterPro" id="IPR039261">
    <property type="entry name" value="FNR_nucleotide-bd"/>
</dbReference>
<dbReference type="InterPro" id="IPR001433">
    <property type="entry name" value="OxRdtase_FAD/NAD-bd"/>
</dbReference>
<dbReference type="InterPro" id="IPR050353">
    <property type="entry name" value="PyrK_electron_transfer"/>
</dbReference>
<dbReference type="InterPro" id="IPR017938">
    <property type="entry name" value="Riboflavin_synthase-like_b-brl"/>
</dbReference>
<dbReference type="NCBIfam" id="NF000797">
    <property type="entry name" value="PRK00054.1-2"/>
    <property type="match status" value="1"/>
</dbReference>
<dbReference type="NCBIfam" id="NF000799">
    <property type="entry name" value="PRK00054.1-4"/>
    <property type="match status" value="1"/>
</dbReference>
<dbReference type="PANTHER" id="PTHR43513">
    <property type="entry name" value="DIHYDROOROTATE DEHYDROGENASE B (NAD(+)), ELECTRON TRANSFER SUBUNIT"/>
    <property type="match status" value="1"/>
</dbReference>
<dbReference type="PANTHER" id="PTHR43513:SF3">
    <property type="entry name" value="DIHYDROOROTATE DEHYDROGENASE B (NAD(+)), ELECTRON TRANSFER SUBUNIT-RELATED"/>
    <property type="match status" value="1"/>
</dbReference>
<dbReference type="Pfam" id="PF10418">
    <property type="entry name" value="DHODB_Fe-S_bind"/>
    <property type="match status" value="1"/>
</dbReference>
<dbReference type="Pfam" id="PF00970">
    <property type="entry name" value="FAD_binding_6"/>
    <property type="match status" value="1"/>
</dbReference>
<dbReference type="Pfam" id="PF00175">
    <property type="entry name" value="NAD_binding_1"/>
    <property type="match status" value="1"/>
</dbReference>
<dbReference type="PIRSF" id="PIRSF006816">
    <property type="entry name" value="Cyc3_hyd_g"/>
    <property type="match status" value="1"/>
</dbReference>
<dbReference type="PRINTS" id="PR00409">
    <property type="entry name" value="PHDIOXRDTASE"/>
</dbReference>
<dbReference type="SUPFAM" id="SSF52343">
    <property type="entry name" value="Ferredoxin reductase-like, C-terminal NADP-linked domain"/>
    <property type="match status" value="1"/>
</dbReference>
<dbReference type="SUPFAM" id="SSF63380">
    <property type="entry name" value="Riboflavin synthase domain-like"/>
    <property type="match status" value="1"/>
</dbReference>
<dbReference type="PROSITE" id="PS51384">
    <property type="entry name" value="FAD_FR"/>
    <property type="match status" value="1"/>
</dbReference>
<comment type="function">
    <text evidence="1">Responsible for channeling the electrons from the oxidation of dihydroorotate from the FMN redox center in the PyrD type B subunit to the ultimate electron acceptor NAD(+).</text>
</comment>
<comment type="cofactor">
    <cofactor evidence="1">
        <name>[2Fe-2S] cluster</name>
        <dbReference type="ChEBI" id="CHEBI:190135"/>
    </cofactor>
    <text evidence="1">Binds 1 [2Fe-2S] cluster per subunit.</text>
</comment>
<comment type="cofactor">
    <cofactor evidence="1">
        <name>FAD</name>
        <dbReference type="ChEBI" id="CHEBI:57692"/>
    </cofactor>
    <text evidence="1">Binds 1 FAD per subunit.</text>
</comment>
<comment type="pathway">
    <text evidence="1">Pyrimidine metabolism; UMP biosynthesis via de novo pathway; orotate from (S)-dihydroorotate (NAD(+) route): step 1/1.</text>
</comment>
<comment type="subunit">
    <text evidence="1">Heterotetramer of 2 PyrK and 2 PyrD type B subunits.</text>
</comment>
<comment type="similarity">
    <text evidence="1">Belongs to the PyrK family.</text>
</comment>
<accession>Q5L0U2</accession>
<gene>
    <name evidence="1" type="primary">pyrK</name>
    <name type="ordered locus">GK1153</name>
</gene>
<organism>
    <name type="scientific">Geobacillus kaustophilus (strain HTA426)</name>
    <dbReference type="NCBI Taxonomy" id="235909"/>
    <lineage>
        <taxon>Bacteria</taxon>
        <taxon>Bacillati</taxon>
        <taxon>Bacillota</taxon>
        <taxon>Bacilli</taxon>
        <taxon>Bacillales</taxon>
        <taxon>Anoxybacillaceae</taxon>
        <taxon>Geobacillus</taxon>
        <taxon>Geobacillus thermoleovorans group</taxon>
    </lineage>
</organism>
<proteinExistence type="inferred from homology"/>
<reference key="1">
    <citation type="journal article" date="2004" name="Nucleic Acids Res.">
        <title>Thermoadaptation trait revealed by the genome sequence of thermophilic Geobacillus kaustophilus.</title>
        <authorList>
            <person name="Takami H."/>
            <person name="Takaki Y."/>
            <person name="Chee G.-J."/>
            <person name="Nishi S."/>
            <person name="Shimamura S."/>
            <person name="Suzuki H."/>
            <person name="Matsui S."/>
            <person name="Uchiyama I."/>
        </authorList>
    </citation>
    <scope>NUCLEOTIDE SEQUENCE [LARGE SCALE GENOMIC DNA]</scope>
    <source>
        <strain>HTA426</strain>
    </source>
</reference>
<evidence type="ECO:0000255" key="1">
    <source>
        <dbReference type="HAMAP-Rule" id="MF_01211"/>
    </source>
</evidence>
<keyword id="KW-0001">2Fe-2S</keyword>
<keyword id="KW-0249">Electron transport</keyword>
<keyword id="KW-0274">FAD</keyword>
<keyword id="KW-0285">Flavoprotein</keyword>
<keyword id="KW-0408">Iron</keyword>
<keyword id="KW-0411">Iron-sulfur</keyword>
<keyword id="KW-0479">Metal-binding</keyword>
<keyword id="KW-0665">Pyrimidine biosynthesis</keyword>
<keyword id="KW-1185">Reference proteome</keyword>
<keyword id="KW-0813">Transport</keyword>
<sequence length="257" mass="27699">MIGRERMTVASQRLIAERTYELTLSGRLVQEMRQPGQFVHVKVAASADPLLRRPLSLCHIDHKQGQCTIIYRQEGKGTALLAQKQPGDTVDVLGPLGNGFPLEAAPADSRALLVGGGIGVPPLYELAKQLTKRGVKVVSVLGFQTKAAVFYEEEFAAFGETHVATDDGSHGTAGRVTDVIEARSLEFDVLYACGPKPMLRALAERFPNRPVYLSLEERMGCGVGACFACVCHVPGSETAYKKVCSDGPVFRAGEVVL</sequence>